<reference key="1">
    <citation type="journal article" date="2007" name="Genome Biol.">
        <title>Characterization and modeling of the Haemophilus influenzae core and supragenomes based on the complete genomic sequences of Rd and 12 clinical nontypeable strains.</title>
        <authorList>
            <person name="Hogg J.S."/>
            <person name="Hu F.Z."/>
            <person name="Janto B."/>
            <person name="Boissy R."/>
            <person name="Hayes J."/>
            <person name="Keefe R."/>
            <person name="Post J.C."/>
            <person name="Ehrlich G.D."/>
        </authorList>
    </citation>
    <scope>NUCLEOTIDE SEQUENCE [LARGE SCALE GENOMIC DNA]</scope>
    <source>
        <strain>PittEE</strain>
    </source>
</reference>
<evidence type="ECO:0000255" key="1">
    <source>
        <dbReference type="HAMAP-Rule" id="MF_00179"/>
    </source>
</evidence>
<sequence>MAKIQLVAQANLPTEYGIFKMVGFEFLDTKKEHVALVMGDISNADEPVLARIHSECLTGDALHSLKCDCGFQLATALKQIQEEGRGVLIYHREEGRGIGLINKIRAYSLQDKGMDTIEANLALGFKADERNFEVCADMFELLGVKKVRLMTNNPEKVETMKKAGINVVERVPLNVGENRYNTKYLDTKAKKMGHYIVHNNDEQHLMTCPHCQEEII</sequence>
<gene>
    <name evidence="1" type="primary">ribA</name>
    <name type="ordered locus">CGSHiEE_02170</name>
</gene>
<organism>
    <name type="scientific">Haemophilus influenzae (strain PittEE)</name>
    <dbReference type="NCBI Taxonomy" id="374930"/>
    <lineage>
        <taxon>Bacteria</taxon>
        <taxon>Pseudomonadati</taxon>
        <taxon>Pseudomonadota</taxon>
        <taxon>Gammaproteobacteria</taxon>
        <taxon>Pasteurellales</taxon>
        <taxon>Pasteurellaceae</taxon>
        <taxon>Haemophilus</taxon>
    </lineage>
</organism>
<accession>A5UAU5</accession>
<feature type="chain" id="PRO_1000040563" description="GTP cyclohydrolase-2">
    <location>
        <begin position="1"/>
        <end position="216"/>
    </location>
</feature>
<feature type="active site" description="Proton acceptor" evidence="1">
    <location>
        <position position="128"/>
    </location>
</feature>
<feature type="active site" description="Nucleophile" evidence="1">
    <location>
        <position position="130"/>
    </location>
</feature>
<feature type="binding site" evidence="1">
    <location>
        <begin position="51"/>
        <end position="55"/>
    </location>
    <ligand>
        <name>GTP</name>
        <dbReference type="ChEBI" id="CHEBI:37565"/>
    </ligand>
</feature>
<feature type="binding site" evidence="1">
    <location>
        <position position="56"/>
    </location>
    <ligand>
        <name>Zn(2+)</name>
        <dbReference type="ChEBI" id="CHEBI:29105"/>
        <note>catalytic</note>
    </ligand>
</feature>
<feature type="binding site" evidence="1">
    <location>
        <position position="67"/>
    </location>
    <ligand>
        <name>Zn(2+)</name>
        <dbReference type="ChEBI" id="CHEBI:29105"/>
        <note>catalytic</note>
    </ligand>
</feature>
<feature type="binding site" evidence="1">
    <location>
        <position position="69"/>
    </location>
    <ligand>
        <name>Zn(2+)</name>
        <dbReference type="ChEBI" id="CHEBI:29105"/>
        <note>catalytic</note>
    </ligand>
</feature>
<feature type="binding site" evidence="1">
    <location>
        <position position="72"/>
    </location>
    <ligand>
        <name>GTP</name>
        <dbReference type="ChEBI" id="CHEBI:37565"/>
    </ligand>
</feature>
<feature type="binding site" evidence="1">
    <location>
        <begin position="94"/>
        <end position="96"/>
    </location>
    <ligand>
        <name>GTP</name>
        <dbReference type="ChEBI" id="CHEBI:37565"/>
    </ligand>
</feature>
<feature type="binding site" evidence="1">
    <location>
        <position position="116"/>
    </location>
    <ligand>
        <name>GTP</name>
        <dbReference type="ChEBI" id="CHEBI:37565"/>
    </ligand>
</feature>
<feature type="binding site" evidence="1">
    <location>
        <position position="151"/>
    </location>
    <ligand>
        <name>GTP</name>
        <dbReference type="ChEBI" id="CHEBI:37565"/>
    </ligand>
</feature>
<feature type="binding site" evidence="1">
    <location>
        <position position="156"/>
    </location>
    <ligand>
        <name>GTP</name>
        <dbReference type="ChEBI" id="CHEBI:37565"/>
    </ligand>
</feature>
<dbReference type="EC" id="3.5.4.25" evidence="1"/>
<dbReference type="EMBL" id="CP000671">
    <property type="protein sequence ID" value="ABQ97896.1"/>
    <property type="molecule type" value="Genomic_DNA"/>
</dbReference>
<dbReference type="SMR" id="A5UAU5"/>
<dbReference type="KEGG" id="hip:CGSHiEE_02170"/>
<dbReference type="HOGENOM" id="CLU_020273_2_1_6"/>
<dbReference type="UniPathway" id="UPA00275">
    <property type="reaction ID" value="UER00400"/>
</dbReference>
<dbReference type="GO" id="GO:0005829">
    <property type="term" value="C:cytosol"/>
    <property type="evidence" value="ECO:0007669"/>
    <property type="project" value="TreeGrafter"/>
</dbReference>
<dbReference type="GO" id="GO:0005525">
    <property type="term" value="F:GTP binding"/>
    <property type="evidence" value="ECO:0007669"/>
    <property type="project" value="UniProtKB-KW"/>
</dbReference>
<dbReference type="GO" id="GO:0003935">
    <property type="term" value="F:GTP cyclohydrolase II activity"/>
    <property type="evidence" value="ECO:0007669"/>
    <property type="project" value="UniProtKB-UniRule"/>
</dbReference>
<dbReference type="GO" id="GO:0008270">
    <property type="term" value="F:zinc ion binding"/>
    <property type="evidence" value="ECO:0007669"/>
    <property type="project" value="UniProtKB-UniRule"/>
</dbReference>
<dbReference type="GO" id="GO:0009231">
    <property type="term" value="P:riboflavin biosynthetic process"/>
    <property type="evidence" value="ECO:0007669"/>
    <property type="project" value="UniProtKB-UniRule"/>
</dbReference>
<dbReference type="CDD" id="cd00641">
    <property type="entry name" value="GTP_cyclohydro2"/>
    <property type="match status" value="1"/>
</dbReference>
<dbReference type="FunFam" id="3.40.50.10990:FF:000002">
    <property type="entry name" value="GTP cyclohydrolase-2"/>
    <property type="match status" value="1"/>
</dbReference>
<dbReference type="Gene3D" id="3.40.50.10990">
    <property type="entry name" value="GTP cyclohydrolase II"/>
    <property type="match status" value="1"/>
</dbReference>
<dbReference type="HAMAP" id="MF_00179">
    <property type="entry name" value="RibA"/>
    <property type="match status" value="1"/>
</dbReference>
<dbReference type="InterPro" id="IPR032677">
    <property type="entry name" value="GTP_cyclohydro_II"/>
</dbReference>
<dbReference type="InterPro" id="IPR000926">
    <property type="entry name" value="RibA"/>
</dbReference>
<dbReference type="InterPro" id="IPR036144">
    <property type="entry name" value="RibA-like_sf"/>
</dbReference>
<dbReference type="NCBIfam" id="NF001591">
    <property type="entry name" value="PRK00393.1"/>
    <property type="match status" value="1"/>
</dbReference>
<dbReference type="NCBIfam" id="TIGR00505">
    <property type="entry name" value="ribA"/>
    <property type="match status" value="1"/>
</dbReference>
<dbReference type="PANTHER" id="PTHR21327:SF18">
    <property type="entry name" value="3,4-DIHYDROXY-2-BUTANONE 4-PHOSPHATE SYNTHASE"/>
    <property type="match status" value="1"/>
</dbReference>
<dbReference type="PANTHER" id="PTHR21327">
    <property type="entry name" value="GTP CYCLOHYDROLASE II-RELATED"/>
    <property type="match status" value="1"/>
</dbReference>
<dbReference type="Pfam" id="PF00925">
    <property type="entry name" value="GTP_cyclohydro2"/>
    <property type="match status" value="1"/>
</dbReference>
<dbReference type="SUPFAM" id="SSF142695">
    <property type="entry name" value="RibA-like"/>
    <property type="match status" value="1"/>
</dbReference>
<proteinExistence type="inferred from homology"/>
<name>RIBA_HAEIE</name>
<keyword id="KW-0342">GTP-binding</keyword>
<keyword id="KW-0378">Hydrolase</keyword>
<keyword id="KW-0479">Metal-binding</keyword>
<keyword id="KW-0547">Nucleotide-binding</keyword>
<keyword id="KW-0686">Riboflavin biosynthesis</keyword>
<keyword id="KW-0862">Zinc</keyword>
<comment type="function">
    <text evidence="1">Catalyzes the conversion of GTP to 2,5-diamino-6-ribosylamino-4(3H)-pyrimidinone 5'-phosphate (DARP), formate and pyrophosphate.</text>
</comment>
<comment type="catalytic activity">
    <reaction evidence="1">
        <text>GTP + 4 H2O = 2,5-diamino-6-hydroxy-4-(5-phosphoribosylamino)-pyrimidine + formate + 2 phosphate + 3 H(+)</text>
        <dbReference type="Rhea" id="RHEA:23704"/>
        <dbReference type="ChEBI" id="CHEBI:15377"/>
        <dbReference type="ChEBI" id="CHEBI:15378"/>
        <dbReference type="ChEBI" id="CHEBI:15740"/>
        <dbReference type="ChEBI" id="CHEBI:37565"/>
        <dbReference type="ChEBI" id="CHEBI:43474"/>
        <dbReference type="ChEBI" id="CHEBI:58614"/>
        <dbReference type="EC" id="3.5.4.25"/>
    </reaction>
</comment>
<comment type="cofactor">
    <cofactor evidence="1">
        <name>Zn(2+)</name>
        <dbReference type="ChEBI" id="CHEBI:29105"/>
    </cofactor>
    <text evidence="1">Binds 1 zinc ion per subunit.</text>
</comment>
<comment type="pathway">
    <text evidence="1">Cofactor biosynthesis; riboflavin biosynthesis; 5-amino-6-(D-ribitylamino)uracil from GTP: step 1/4.</text>
</comment>
<comment type="similarity">
    <text evidence="1">Belongs to the GTP cyclohydrolase II family.</text>
</comment>
<protein>
    <recommendedName>
        <fullName evidence="1">GTP cyclohydrolase-2</fullName>
        <ecNumber evidence="1">3.5.4.25</ecNumber>
    </recommendedName>
    <alternativeName>
        <fullName evidence="1">GTP cyclohydrolase II</fullName>
    </alternativeName>
</protein>